<protein>
    <recommendedName>
        <fullName>Dihydropteroate synthase</fullName>
        <shortName>DHPS</shortName>
        <ecNumber>2.5.1.15</ecNumber>
    </recommendedName>
    <alternativeName>
        <fullName>Dihydropteroate pyrophosphorylase</fullName>
    </alternativeName>
</protein>
<gene>
    <name type="ordered locus">Cbei_0206</name>
</gene>
<name>DHPS_CLOB8</name>
<evidence type="ECO:0000250" key="1">
    <source>
        <dbReference type="UniProtKB" id="P0AC13"/>
    </source>
</evidence>
<evidence type="ECO:0000250" key="2">
    <source>
        <dbReference type="UniProtKB" id="P9WND1"/>
    </source>
</evidence>
<evidence type="ECO:0000255" key="3">
    <source>
        <dbReference type="PROSITE-ProRule" id="PRU00334"/>
    </source>
</evidence>
<evidence type="ECO:0000305" key="4"/>
<proteinExistence type="inferred from homology"/>
<dbReference type="EC" id="2.5.1.15"/>
<dbReference type="EMBL" id="CP000721">
    <property type="protein sequence ID" value="ABR32396.1"/>
    <property type="molecule type" value="Genomic_DNA"/>
</dbReference>
<dbReference type="EMBL" id="L04468">
    <property type="protein sequence ID" value="AAA52083.1"/>
    <property type="molecule type" value="Genomic_DNA"/>
</dbReference>
<dbReference type="RefSeq" id="WP_011967558.1">
    <property type="nucleotide sequence ID" value="NC_009617.1"/>
</dbReference>
<dbReference type="SMR" id="Q05621"/>
<dbReference type="KEGG" id="cbe:Cbei_0206"/>
<dbReference type="eggNOG" id="COG0294">
    <property type="taxonomic scope" value="Bacteria"/>
</dbReference>
<dbReference type="HOGENOM" id="CLU_008023_0_2_9"/>
<dbReference type="UniPathway" id="UPA00077">
    <property type="reaction ID" value="UER00156"/>
</dbReference>
<dbReference type="Proteomes" id="UP000000565">
    <property type="component" value="Chromosome"/>
</dbReference>
<dbReference type="GO" id="GO:0005829">
    <property type="term" value="C:cytosol"/>
    <property type="evidence" value="ECO:0007669"/>
    <property type="project" value="TreeGrafter"/>
</dbReference>
<dbReference type="GO" id="GO:0004156">
    <property type="term" value="F:dihydropteroate synthase activity"/>
    <property type="evidence" value="ECO:0007669"/>
    <property type="project" value="UniProtKB-EC"/>
</dbReference>
<dbReference type="GO" id="GO:0046872">
    <property type="term" value="F:metal ion binding"/>
    <property type="evidence" value="ECO:0007669"/>
    <property type="project" value="UniProtKB-KW"/>
</dbReference>
<dbReference type="GO" id="GO:0046656">
    <property type="term" value="P:folic acid biosynthetic process"/>
    <property type="evidence" value="ECO:0007669"/>
    <property type="project" value="UniProtKB-KW"/>
</dbReference>
<dbReference type="GO" id="GO:0046654">
    <property type="term" value="P:tetrahydrofolate biosynthetic process"/>
    <property type="evidence" value="ECO:0007669"/>
    <property type="project" value="UniProtKB-UniPathway"/>
</dbReference>
<dbReference type="CDD" id="cd00739">
    <property type="entry name" value="DHPS"/>
    <property type="match status" value="1"/>
</dbReference>
<dbReference type="FunFam" id="3.20.20.20:FF:000006">
    <property type="entry name" value="Dihydropteroate synthase"/>
    <property type="match status" value="1"/>
</dbReference>
<dbReference type="Gene3D" id="3.20.20.20">
    <property type="entry name" value="Dihydropteroate synthase-like"/>
    <property type="match status" value="1"/>
</dbReference>
<dbReference type="InterPro" id="IPR045031">
    <property type="entry name" value="DHP_synth-like"/>
</dbReference>
<dbReference type="InterPro" id="IPR006390">
    <property type="entry name" value="DHP_synth_dom"/>
</dbReference>
<dbReference type="InterPro" id="IPR011005">
    <property type="entry name" value="Dihydropteroate_synth-like_sf"/>
</dbReference>
<dbReference type="InterPro" id="IPR000489">
    <property type="entry name" value="Pterin-binding_dom"/>
</dbReference>
<dbReference type="NCBIfam" id="TIGR01496">
    <property type="entry name" value="DHPS"/>
    <property type="match status" value="1"/>
</dbReference>
<dbReference type="PANTHER" id="PTHR20941">
    <property type="entry name" value="FOLATE SYNTHESIS PROTEINS"/>
    <property type="match status" value="1"/>
</dbReference>
<dbReference type="PANTHER" id="PTHR20941:SF1">
    <property type="entry name" value="FOLIC ACID SYNTHESIS PROTEIN FOL1"/>
    <property type="match status" value="1"/>
</dbReference>
<dbReference type="Pfam" id="PF00809">
    <property type="entry name" value="Pterin_bind"/>
    <property type="match status" value="1"/>
</dbReference>
<dbReference type="SUPFAM" id="SSF51717">
    <property type="entry name" value="Dihydropteroate synthetase-like"/>
    <property type="match status" value="1"/>
</dbReference>
<dbReference type="PROSITE" id="PS00792">
    <property type="entry name" value="DHPS_1"/>
    <property type="match status" value="1"/>
</dbReference>
<dbReference type="PROSITE" id="PS00793">
    <property type="entry name" value="DHPS_2"/>
    <property type="match status" value="1"/>
</dbReference>
<dbReference type="PROSITE" id="PS50972">
    <property type="entry name" value="PTERIN_BINDING"/>
    <property type="match status" value="1"/>
</dbReference>
<comment type="function">
    <text evidence="1">Catalyzes the condensation of para-aminobenzoate (pABA) with 6-hydroxymethyl-7,8-dihydropterin diphosphate (DHPt-PP) to form 7,8-dihydropteroate (H2Pte), the immediate precursor of folate derivatives.</text>
</comment>
<comment type="catalytic activity">
    <reaction evidence="1">
        <text>(7,8-dihydropterin-6-yl)methyl diphosphate + 4-aminobenzoate = 7,8-dihydropteroate + diphosphate</text>
        <dbReference type="Rhea" id="RHEA:19949"/>
        <dbReference type="ChEBI" id="CHEBI:17836"/>
        <dbReference type="ChEBI" id="CHEBI:17839"/>
        <dbReference type="ChEBI" id="CHEBI:33019"/>
        <dbReference type="ChEBI" id="CHEBI:72950"/>
        <dbReference type="EC" id="2.5.1.15"/>
    </reaction>
</comment>
<comment type="cofactor">
    <cofactor evidence="1">
        <name>Mg(2+)</name>
        <dbReference type="ChEBI" id="CHEBI:18420"/>
    </cofactor>
</comment>
<comment type="pathway">
    <text>Cofactor biosynthesis; tetrahydrofolate biosynthesis; 7,8-dihydrofolate from 2-amino-4-hydroxy-6-hydroxymethyl-7,8-dihydropteridine diphosphate and 4-aminobenzoate: step 1/2.</text>
</comment>
<comment type="similarity">
    <text evidence="4">Belongs to the DHPS family.</text>
</comment>
<sequence length="269" mass="29948">MKIGSKEFNIGERTYIMGILNFTPDSFSDGGKFNDIDVAVKHVKEMIDNGADIIDVGGESTRPGYEIVSEEEEISRVVPIIKAIKEDFDIPVSIDTYKAKVAEQAIEAGANLINDIWGFKKDKDMAKVAAKYNVPCCLMHNRDNTEYKNLMEDILNDLKECINIAKDAGVKDENIILDPGIGFGKTYEQNLEAMNNLERIKELGYPILLGTSRKSMIGLALNLPVEERIEGTVATTVIGIMKDACDFVRVHDVLENSRAAKMTDIIVRR</sequence>
<keyword id="KW-0289">Folate biosynthesis</keyword>
<keyword id="KW-0460">Magnesium</keyword>
<keyword id="KW-0479">Metal-binding</keyword>
<keyword id="KW-0808">Transferase</keyword>
<accession>Q05621</accession>
<accession>A6LPW6</accession>
<reference key="1">
    <citation type="submission" date="2007-06" db="EMBL/GenBank/DDBJ databases">
        <title>Complete sequence of Clostridium beijerinckii NCIMB 8052.</title>
        <authorList>
            <consortium name="US DOE Joint Genome Institute"/>
            <person name="Copeland A."/>
            <person name="Lucas S."/>
            <person name="Lapidus A."/>
            <person name="Barry K."/>
            <person name="Detter J.C."/>
            <person name="Glavina del Rio T."/>
            <person name="Hammon N."/>
            <person name="Israni S."/>
            <person name="Dalin E."/>
            <person name="Tice H."/>
            <person name="Pitluck S."/>
            <person name="Sims D."/>
            <person name="Brettin T."/>
            <person name="Bruce D."/>
            <person name="Tapia R."/>
            <person name="Brainard J."/>
            <person name="Schmutz J."/>
            <person name="Larimer F."/>
            <person name="Land M."/>
            <person name="Hauser L."/>
            <person name="Kyrpides N."/>
            <person name="Mikhailova N."/>
            <person name="Bennet G."/>
            <person name="Cann I."/>
            <person name="Chen J.-S."/>
            <person name="Contreras A.L."/>
            <person name="Jones D."/>
            <person name="Kashket E."/>
            <person name="Mitchell W."/>
            <person name="Stoddard S."/>
            <person name="Schwarz W."/>
            <person name="Qureshi N."/>
            <person name="Young M."/>
            <person name="Shi Z."/>
            <person name="Ezeji T."/>
            <person name="White B."/>
            <person name="Blaschek H."/>
            <person name="Richardson P."/>
        </authorList>
    </citation>
    <scope>NUCLEOTIDE SEQUENCE [LARGE SCALE GENOMIC DNA]</scope>
    <source>
        <strain>ATCC 51743 / NCIMB 8052</strain>
    </source>
</reference>
<reference key="2">
    <citation type="journal article" date="1993" name="Gene">
        <title>Cloning and sequence analysis of the genes encoding phosphotransbutyrylase and butyrate kinase from Clostridium acetobutylicum NCIMB 8052.</title>
        <authorList>
            <person name="Oultram J.D."/>
            <person name="Burr I.D."/>
            <person name="Elmore M.J."/>
            <person name="Minton N.P."/>
        </authorList>
    </citation>
    <scope>NUCLEOTIDE SEQUENCE [GENOMIC DNA] OF 1-205</scope>
</reference>
<organism>
    <name type="scientific">Clostridium beijerinckii (strain ATCC 51743 / NCIMB 8052)</name>
    <name type="common">Clostridium acetobutylicum</name>
    <dbReference type="NCBI Taxonomy" id="290402"/>
    <lineage>
        <taxon>Bacteria</taxon>
        <taxon>Bacillati</taxon>
        <taxon>Bacillota</taxon>
        <taxon>Clostridia</taxon>
        <taxon>Eubacteriales</taxon>
        <taxon>Clostridiaceae</taxon>
        <taxon>Clostridium</taxon>
    </lineage>
</organism>
<feature type="chain" id="PRO_0000168206" description="Dihydropteroate synthase">
    <location>
        <begin position="1"/>
        <end position="269"/>
    </location>
</feature>
<feature type="domain" description="Pterin-binding" evidence="3">
    <location>
        <begin position="14"/>
        <end position="261"/>
    </location>
</feature>
<feature type="binding site" evidence="2">
    <location>
        <position position="21"/>
    </location>
    <ligand>
        <name>Mg(2+)</name>
        <dbReference type="ChEBI" id="CHEBI:18420"/>
    </ligand>
</feature>
<feature type="binding site" evidence="1">
    <location>
        <position position="61"/>
    </location>
    <ligand>
        <name>(7,8-dihydropterin-6-yl)methyl diphosphate</name>
        <dbReference type="ChEBI" id="CHEBI:72950"/>
    </ligand>
</feature>
<feature type="binding site" evidence="1">
    <location>
        <position position="95"/>
    </location>
    <ligand>
        <name>(7,8-dihydropterin-6-yl)methyl diphosphate</name>
        <dbReference type="ChEBI" id="CHEBI:72950"/>
    </ligand>
</feature>
<feature type="binding site" evidence="1">
    <location>
        <position position="114"/>
    </location>
    <ligand>
        <name>(7,8-dihydropterin-6-yl)methyl diphosphate</name>
        <dbReference type="ChEBI" id="CHEBI:72950"/>
    </ligand>
</feature>
<feature type="binding site" evidence="1">
    <location>
        <position position="178"/>
    </location>
    <ligand>
        <name>(7,8-dihydropterin-6-yl)methyl diphosphate</name>
        <dbReference type="ChEBI" id="CHEBI:72950"/>
    </ligand>
</feature>
<feature type="binding site" evidence="1">
    <location>
        <position position="214"/>
    </location>
    <ligand>
        <name>(7,8-dihydropterin-6-yl)methyl diphosphate</name>
        <dbReference type="ChEBI" id="CHEBI:72950"/>
    </ligand>
</feature>
<feature type="binding site" evidence="1">
    <location>
        <begin position="249"/>
        <end position="251"/>
    </location>
    <ligand>
        <name>(7,8-dihydropterin-6-yl)methyl diphosphate</name>
        <dbReference type="ChEBI" id="CHEBI:72950"/>
    </ligand>
</feature>